<organism>
    <name type="scientific">Pycnopodia helianthoides</name>
    <name type="common">Sunflower sea star</name>
    <name type="synonym">Asterias helianthoides</name>
    <dbReference type="NCBI Taxonomy" id="7614"/>
    <lineage>
        <taxon>Eukaryota</taxon>
        <taxon>Metazoa</taxon>
        <taxon>Echinodermata</taxon>
        <taxon>Eleutherozoa</taxon>
        <taxon>Asterozoa</taxon>
        <taxon>Asteroidea</taxon>
        <taxon>Forcipulatacea</taxon>
        <taxon>Forcipulatida</taxon>
        <taxon>Asteriidae</taxon>
        <taxon>Pycnopodia</taxon>
    </lineage>
</organism>
<evidence type="ECO:0000250" key="1"/>
<evidence type="ECO:0000250" key="2">
    <source>
        <dbReference type="UniProtKB" id="P62805"/>
    </source>
</evidence>
<evidence type="ECO:0000256" key="3">
    <source>
        <dbReference type="SAM" id="MobiDB-lite"/>
    </source>
</evidence>
<evidence type="ECO:0000305" key="4"/>
<feature type="initiator methionine" description="Removed" evidence="1">
    <location>
        <position position="1"/>
    </location>
</feature>
<feature type="chain" id="PRO_0000158353" description="Histone H4">
    <location>
        <begin position="2"/>
        <end position="103"/>
    </location>
</feature>
<feature type="DNA-binding region">
    <location>
        <begin position="17"/>
        <end position="21"/>
    </location>
</feature>
<feature type="region of interest" description="Disordered" evidence="3">
    <location>
        <begin position="1"/>
        <end position="20"/>
    </location>
</feature>
<feature type="compositionally biased region" description="Gly residues" evidence="3">
    <location>
        <begin position="1"/>
        <end position="14"/>
    </location>
</feature>
<feature type="modified residue" description="N-acetylserine" evidence="1">
    <location>
        <position position="2"/>
    </location>
</feature>
<feature type="modified residue" description="N6-acetyl-N6-methyllysine; alternate" evidence="2">
    <location>
        <position position="6"/>
    </location>
</feature>
<feature type="modified residue" description="N6-acetyl-N6-methyllysine; alternate" evidence="2">
    <location>
        <position position="13"/>
    </location>
</feature>
<feature type="modified residue" description="N6-acetyllysine" evidence="1">
    <location>
        <position position="17"/>
    </location>
</feature>
<feature type="modified residue" description="N6-methyllysine" evidence="1">
    <location>
        <position position="21"/>
    </location>
</feature>
<dbReference type="EMBL" id="X54114">
    <property type="protein sequence ID" value="CAA38053.1"/>
    <property type="molecule type" value="Genomic_DNA"/>
</dbReference>
<dbReference type="PIR" id="S20668">
    <property type="entry name" value="S20668"/>
</dbReference>
<dbReference type="SMR" id="P62779"/>
<dbReference type="GO" id="GO:0000786">
    <property type="term" value="C:nucleosome"/>
    <property type="evidence" value="ECO:0007669"/>
    <property type="project" value="UniProtKB-KW"/>
</dbReference>
<dbReference type="GO" id="GO:0005634">
    <property type="term" value="C:nucleus"/>
    <property type="evidence" value="ECO:0007669"/>
    <property type="project" value="UniProtKB-SubCell"/>
</dbReference>
<dbReference type="GO" id="GO:0003677">
    <property type="term" value="F:DNA binding"/>
    <property type="evidence" value="ECO:0007669"/>
    <property type="project" value="UniProtKB-KW"/>
</dbReference>
<dbReference type="GO" id="GO:0046982">
    <property type="term" value="F:protein heterodimerization activity"/>
    <property type="evidence" value="ECO:0007669"/>
    <property type="project" value="InterPro"/>
</dbReference>
<dbReference type="GO" id="GO:0030527">
    <property type="term" value="F:structural constituent of chromatin"/>
    <property type="evidence" value="ECO:0007669"/>
    <property type="project" value="InterPro"/>
</dbReference>
<dbReference type="CDD" id="cd22912">
    <property type="entry name" value="HFD_H4"/>
    <property type="match status" value="1"/>
</dbReference>
<dbReference type="FunFam" id="1.10.20.10:FF:000002">
    <property type="entry name" value="Histone H4"/>
    <property type="match status" value="1"/>
</dbReference>
<dbReference type="Gene3D" id="1.10.20.10">
    <property type="entry name" value="Histone, subunit A"/>
    <property type="match status" value="1"/>
</dbReference>
<dbReference type="InterPro" id="IPR035425">
    <property type="entry name" value="CENP-T/H4_C"/>
</dbReference>
<dbReference type="InterPro" id="IPR009072">
    <property type="entry name" value="Histone-fold"/>
</dbReference>
<dbReference type="InterPro" id="IPR001951">
    <property type="entry name" value="Histone_H4"/>
</dbReference>
<dbReference type="InterPro" id="IPR019809">
    <property type="entry name" value="Histone_H4_CS"/>
</dbReference>
<dbReference type="PANTHER" id="PTHR10484">
    <property type="entry name" value="HISTONE H4"/>
    <property type="match status" value="1"/>
</dbReference>
<dbReference type="Pfam" id="PF15511">
    <property type="entry name" value="CENP-T_C"/>
    <property type="match status" value="1"/>
</dbReference>
<dbReference type="PRINTS" id="PR00623">
    <property type="entry name" value="HISTONEH4"/>
</dbReference>
<dbReference type="SMART" id="SM00417">
    <property type="entry name" value="H4"/>
    <property type="match status" value="1"/>
</dbReference>
<dbReference type="SUPFAM" id="SSF47113">
    <property type="entry name" value="Histone-fold"/>
    <property type="match status" value="1"/>
</dbReference>
<dbReference type="PROSITE" id="PS00047">
    <property type="entry name" value="HISTONE_H4"/>
    <property type="match status" value="1"/>
</dbReference>
<accession>P62779</accession>
<accession>P02306</accession>
<accession>P18678</accession>
<protein>
    <recommendedName>
        <fullName>Histone H4</fullName>
    </recommendedName>
</protein>
<comment type="function">
    <text>Core component of nucleosome. Nucleosomes wrap and compact DNA into chromatin, limiting DNA accessibility to the cellular machineries which require DNA as a template. Histones thereby play a central role in transcription regulation, DNA repair, DNA replication and chromosomal stability. DNA accessibility is regulated via a complex set of post-translational modifications of histones, also called histone code, and nucleosome remodeling.</text>
</comment>
<comment type="subunit">
    <text>The nucleosome is a histone octamer containing two molecules each of H2A, H2B, H3 and H4 assembled in one H3-H4 heterotetramer and two H2A-H2B heterodimers. The octamer wraps approximately 147 bp of DNA.</text>
</comment>
<comment type="subcellular location">
    <subcellularLocation>
        <location evidence="1">Nucleus</location>
    </subcellularLocation>
    <subcellularLocation>
        <location evidence="1">Chromosome</location>
    </subcellularLocation>
</comment>
<comment type="similarity">
    <text evidence="4">Belongs to the histone H4 family.</text>
</comment>
<proteinExistence type="inferred from homology"/>
<keyword id="KW-0007">Acetylation</keyword>
<keyword id="KW-0158">Chromosome</keyword>
<keyword id="KW-0238">DNA-binding</keyword>
<keyword id="KW-0488">Methylation</keyword>
<keyword id="KW-0544">Nucleosome core</keyword>
<keyword id="KW-0539">Nucleus</keyword>
<name>H4_PYCHE</name>
<sequence>MSGRGKGGKGLGKGGAKRHRKVLRDNIQGITKPAIRRLARRGGVKRISGLIYEETRGVLKVFLENVIRDAVTYCEHAKRKTVTAMDVVYALKRQGRTLYGFGG</sequence>
<reference key="1">
    <citation type="submission" date="1990-07" db="EMBL/GenBank/DDBJ databases">
        <title>Sequence and organisation of histone gene clusters in sea stars.</title>
        <authorList>
            <person name="Wu Y."/>
            <person name="Kowbel D."/>
            <person name="Smith M.J."/>
        </authorList>
    </citation>
    <scope>NUCLEOTIDE SEQUENCE [GENOMIC DNA]</scope>
</reference>